<keyword id="KW-0903">Direct protein sequencing</keyword>
<keyword id="KW-1015">Disulfide bond</keyword>
<keyword id="KW-0960">Knottin</keyword>
<keyword id="KW-0611">Plant defense</keyword>
<keyword id="KW-0873">Pyrrolidone carboxylic acid</keyword>
<reference evidence="6" key="1">
    <citation type="journal article" date="2012" name="J. Biol. Chem.">
        <title>Cyclotides associate with leaf vasculature and are the products of a novel precursor in Petunia (Solanaceae).</title>
        <authorList>
            <person name="Poth A.G."/>
            <person name="Mylne J.S."/>
            <person name="Grassl J."/>
            <person name="Lyons R.E."/>
            <person name="Millar A.H."/>
            <person name="Colgrave M.L."/>
            <person name="Craik D.J."/>
        </authorList>
    </citation>
    <scope>PROTEIN SEQUENCE</scope>
    <scope>TISSUE SPECIFICITY</scope>
    <scope>DISULFIDE BONDS</scope>
    <scope>PYROGLUTAMATE FORMATION AT GLN-1</scope>
    <scope>MASS SPECTROMETRY</scope>
    <source>
        <tissue evidence="4">Root</tissue>
    </source>
</reference>
<evidence type="ECO:0000250" key="1"/>
<evidence type="ECO:0000250" key="2">
    <source>
        <dbReference type="UniProtKB" id="P56254"/>
    </source>
</evidence>
<evidence type="ECO:0000255" key="3"/>
<evidence type="ECO:0000269" key="4">
    <source>
    </source>
</evidence>
<evidence type="ECO:0000303" key="5">
    <source>
    </source>
</evidence>
<evidence type="ECO:0000305" key="6"/>
<proteinExistence type="evidence at protein level"/>
<name>CYCM_PETHY</name>
<dbReference type="SMR" id="B3EWH7"/>
<dbReference type="GO" id="GO:0006952">
    <property type="term" value="P:defense response"/>
    <property type="evidence" value="ECO:0007669"/>
    <property type="project" value="UniProtKB-KW"/>
</dbReference>
<dbReference type="InterPro" id="IPR005535">
    <property type="entry name" value="Cyclotide"/>
</dbReference>
<dbReference type="InterPro" id="IPR012323">
    <property type="entry name" value="Cyclotide_bracelet_CS"/>
</dbReference>
<dbReference type="InterPro" id="IPR036146">
    <property type="entry name" value="Cyclotide_sf"/>
</dbReference>
<dbReference type="Pfam" id="PF03784">
    <property type="entry name" value="Cyclotide"/>
    <property type="match status" value="1"/>
</dbReference>
<dbReference type="PIRSF" id="PIRSF037891">
    <property type="entry name" value="Cycloviolacin"/>
    <property type="match status" value="1"/>
</dbReference>
<dbReference type="SUPFAM" id="SSF57038">
    <property type="entry name" value="Cyclotides"/>
    <property type="match status" value="1"/>
</dbReference>
<dbReference type="PROSITE" id="PS60008">
    <property type="entry name" value="CYCLOTIDE_BRACELET"/>
    <property type="match status" value="1"/>
</dbReference>
<accession>B3EWH7</accession>
<organism>
    <name type="scientific">Petunia hybrida</name>
    <name type="common">Petunia</name>
    <dbReference type="NCBI Taxonomy" id="4102"/>
    <lineage>
        <taxon>Eukaryota</taxon>
        <taxon>Viridiplantae</taxon>
        <taxon>Streptophyta</taxon>
        <taxon>Embryophyta</taxon>
        <taxon>Tracheophyta</taxon>
        <taxon>Spermatophyta</taxon>
        <taxon>Magnoliopsida</taxon>
        <taxon>eudicotyledons</taxon>
        <taxon>Gunneridae</taxon>
        <taxon>Pentapetalae</taxon>
        <taxon>asterids</taxon>
        <taxon>lamiids</taxon>
        <taxon>Solanales</taxon>
        <taxon>Solanaceae</taxon>
        <taxon>Petunioideae</taxon>
        <taxon>Petunia</taxon>
    </lineage>
</organism>
<comment type="function">
    <text evidence="1 6">Probably participates in a plant defense mechanism.</text>
</comment>
<comment type="tissue specificity">
    <text evidence="4">Expressed in midvein, lamina and periphery of leaves (at protein level).</text>
</comment>
<comment type="domain">
    <text evidence="4">The presence of a 'disulfide through disulfide knot' structurally defines this protein as a knottin.</text>
</comment>
<comment type="PTM">
    <text evidence="4">Contains 3 disulfide bonds.</text>
</comment>
<comment type="mass spectrometry"/>
<comment type="similarity">
    <text evidence="3">Belongs to the cyclotide family. Bracelet subfamily.</text>
</comment>
<comment type="caution">
    <text evidence="6">This peptide is linear but closely related to cyclotides. Since in UniProtKB the primary structure is preferred to classify proteins, the sequence is assigned to the cyclotide family.</text>
</comment>
<sequence>QSISCAESCVWIPCATSLIGCSCVNSRCIYSK</sequence>
<protein>
    <recommendedName>
        <fullName evidence="5">Acyclotide phyb-M</fullName>
    </recommendedName>
</protein>
<feature type="peptide" id="PRO_0000419341" description="Acyclotide phyb-M" evidence="4">
    <location>
        <begin position="1"/>
        <end position="32"/>
    </location>
</feature>
<feature type="modified residue" description="Pyrrolidone carboxylic acid" evidence="4">
    <location>
        <position position="1"/>
    </location>
</feature>
<feature type="disulfide bond" evidence="2">
    <location>
        <begin position="5"/>
        <end position="21"/>
    </location>
</feature>
<feature type="disulfide bond" evidence="2">
    <location>
        <begin position="9"/>
        <end position="23"/>
    </location>
</feature>
<feature type="disulfide bond" evidence="2">
    <location>
        <begin position="14"/>
        <end position="28"/>
    </location>
</feature>
<feature type="unsure residue" description="I or L" evidence="4">
    <location>
        <position position="3"/>
    </location>
</feature>
<feature type="unsure residue" description="I or L" evidence="4">
    <location>
        <position position="12"/>
    </location>
</feature>
<feature type="unsure residue" description="L or I" evidence="4">
    <location>
        <position position="18"/>
    </location>
</feature>
<feature type="unsure residue" description="I or L" evidence="4">
    <location>
        <position position="19"/>
    </location>
</feature>
<feature type="unsure residue" description="I or L" evidence="4">
    <location>
        <position position="29"/>
    </location>
</feature>